<dbReference type="EC" id="3.1.1.73"/>
<dbReference type="EMBL" id="AJ293029">
    <property type="protein sequence ID" value="CAC05587.1"/>
    <property type="molecule type" value="mRNA"/>
</dbReference>
<dbReference type="EMBL" id="BX842597">
    <property type="protein sequence ID" value="CAE75726.1"/>
    <property type="molecule type" value="Genomic_DNA"/>
</dbReference>
<dbReference type="EMBL" id="CM002237">
    <property type="protein sequence ID" value="EAA33979.1"/>
    <property type="molecule type" value="Genomic_DNA"/>
</dbReference>
<dbReference type="RefSeq" id="XP_963215.1">
    <property type="nucleotide sequence ID" value="XM_958122.2"/>
</dbReference>
<dbReference type="SMR" id="Q9HGR3"/>
<dbReference type="STRING" id="367110.Q9HGR3"/>
<dbReference type="ESTHER" id="neucr-faeb">
    <property type="family name" value="Esterase_phb"/>
</dbReference>
<dbReference type="GlyCosmos" id="Q9HGR3">
    <property type="glycosylation" value="4 sites, No reported glycans"/>
</dbReference>
<dbReference type="PaxDb" id="5141-EFNCRP00000009285"/>
<dbReference type="EnsemblFungi" id="EAA33979">
    <property type="protein sequence ID" value="EAA33979"/>
    <property type="gene ID" value="NCU09491"/>
</dbReference>
<dbReference type="GeneID" id="3879354"/>
<dbReference type="KEGG" id="ncr:NCU09491"/>
<dbReference type="VEuPathDB" id="FungiDB:NCU09491"/>
<dbReference type="HOGENOM" id="CLU_027551_1_1_1"/>
<dbReference type="InParanoid" id="Q9HGR3"/>
<dbReference type="OMA" id="VMLKFFG"/>
<dbReference type="OrthoDB" id="2425929at2759"/>
<dbReference type="BRENDA" id="3.1.1.73">
    <property type="organism ID" value="3627"/>
</dbReference>
<dbReference type="Proteomes" id="UP000001805">
    <property type="component" value="Chromosome 6, Linkage Group II"/>
</dbReference>
<dbReference type="GO" id="GO:0005576">
    <property type="term" value="C:extracellular region"/>
    <property type="evidence" value="ECO:0000250"/>
    <property type="project" value="UniProtKB"/>
</dbReference>
<dbReference type="GO" id="GO:0030600">
    <property type="term" value="F:feruloyl esterase activity"/>
    <property type="evidence" value="ECO:0000250"/>
    <property type="project" value="UniProtKB"/>
</dbReference>
<dbReference type="GO" id="GO:0016998">
    <property type="term" value="P:cell wall macromolecule catabolic process"/>
    <property type="evidence" value="ECO:0000250"/>
    <property type="project" value="UniProtKB"/>
</dbReference>
<dbReference type="GO" id="GO:0045493">
    <property type="term" value="P:xylan catabolic process"/>
    <property type="evidence" value="ECO:0007669"/>
    <property type="project" value="UniProtKB-KW"/>
</dbReference>
<dbReference type="FunFam" id="3.40.50.1820:FF:000203">
    <property type="entry name" value="Feruloyl esterase B"/>
    <property type="match status" value="1"/>
</dbReference>
<dbReference type="Gene3D" id="3.40.50.1820">
    <property type="entry name" value="alpha/beta hydrolase"/>
    <property type="match status" value="1"/>
</dbReference>
<dbReference type="InterPro" id="IPR029058">
    <property type="entry name" value="AB_hydrolase_fold"/>
</dbReference>
<dbReference type="InterPro" id="IPR010126">
    <property type="entry name" value="Esterase_phb"/>
</dbReference>
<dbReference type="InterPro" id="IPR050955">
    <property type="entry name" value="Plant_Biomass_Hydrol_Est"/>
</dbReference>
<dbReference type="NCBIfam" id="TIGR01840">
    <property type="entry name" value="esterase_phb"/>
    <property type="match status" value="1"/>
</dbReference>
<dbReference type="PANTHER" id="PTHR43037:SF3">
    <property type="entry name" value="FERULOYL ESTERASE B"/>
    <property type="match status" value="1"/>
</dbReference>
<dbReference type="PANTHER" id="PTHR43037">
    <property type="entry name" value="UNNAMED PRODUCT-RELATED"/>
    <property type="match status" value="1"/>
</dbReference>
<dbReference type="Pfam" id="PF10503">
    <property type="entry name" value="Esterase_PHB"/>
    <property type="match status" value="1"/>
</dbReference>
<dbReference type="SUPFAM" id="SSF53474">
    <property type="entry name" value="alpha/beta-Hydrolases"/>
    <property type="match status" value="2"/>
</dbReference>
<gene>
    <name type="primary">fae-1</name>
    <name type="ORF">B22K18.040</name>
    <name type="ORF">NCU09491</name>
</gene>
<feature type="signal peptide" evidence="2">
    <location>
        <begin position="1"/>
        <end position="18"/>
    </location>
</feature>
<feature type="chain" id="PRO_0000021228" description="Feruloyl esterase B">
    <location>
        <begin position="19"/>
        <end position="292"/>
    </location>
</feature>
<feature type="glycosylation site" description="N-linked (GlcNAc...) asparagine" evidence="2">
    <location>
        <position position="88"/>
    </location>
</feature>
<feature type="glycosylation site" description="N-linked (GlcNAc...) asparagine" evidence="2">
    <location>
        <position position="117"/>
    </location>
</feature>
<feature type="glycosylation site" description="N-linked (GlcNAc...) asparagine" evidence="2">
    <location>
        <position position="179"/>
    </location>
</feature>
<feature type="glycosylation site" description="N-linked (GlcNAc...) asparagine" evidence="2">
    <location>
        <position position="245"/>
    </location>
</feature>
<feature type="sequence conflict" description="In Ref. 1; CAC05587." evidence="3" ref="1">
    <original>Y</original>
    <variation>H</variation>
    <location>
        <position position="37"/>
    </location>
</feature>
<feature type="sequence conflict" description="In Ref. 1; CAC05587." evidence="3" ref="1">
    <original>Y</original>
    <variation>C</variation>
    <location>
        <position position="214"/>
    </location>
</feature>
<sequence>MLPRTLLGLALTAATGLCASLQQVTNWGSNPTNIRMYTYVPDKLATKPAIIVALHGCGGTAPSWYSGTRLPSYADQYGFILIYPGTPNMSNCWGVNDPASLTHGAGGDSLGIVAMVNYTIAKYNADASRVYVMGTSSGGMMTNVMAATYPEVFEAGAAYSGVAHACFAGAASATPFSPNQTCARGLQHTPEEWGNFVRNSYPGYTGRRPRMQIYHGLADNLVYPRCAMEALKQWSNVLGVEFSRNVSGVPSQAYTQIVYGDGSKLVGYMGAGVGHVAPTNEQVMLKFFGLIN</sequence>
<proteinExistence type="evidence at transcript level"/>
<evidence type="ECO:0000250" key="1"/>
<evidence type="ECO:0000255" key="2"/>
<evidence type="ECO:0000305" key="3"/>
<reference key="1">
    <citation type="journal article" date="2003" name="Biochem. J.">
        <title>A non-modular type B feruloyl esterase from Neurospora crassa exhibits concentration-dependent substrate inhibition.</title>
        <authorList>
            <person name="Crepin V.F."/>
            <person name="Faulds C.B."/>
            <person name="Connerton I.F."/>
        </authorList>
    </citation>
    <scope>NUCLEOTIDE SEQUENCE [MRNA]</scope>
    <source>
        <strain>ATCC 24698 / 74-OR23-1A / CBS 708.71 / DSM 1257 / FGSC 987</strain>
    </source>
</reference>
<reference key="2">
    <citation type="journal article" date="2003" name="Nucleic Acids Res.">
        <title>What's in the genome of a filamentous fungus? Analysis of the Neurospora genome sequence.</title>
        <authorList>
            <person name="Mannhaupt G."/>
            <person name="Montrone C."/>
            <person name="Haase D."/>
            <person name="Mewes H.-W."/>
            <person name="Aign V."/>
            <person name="Hoheisel J.D."/>
            <person name="Fartmann B."/>
            <person name="Nyakatura G."/>
            <person name="Kempken F."/>
            <person name="Maier J."/>
            <person name="Schulte U."/>
        </authorList>
    </citation>
    <scope>NUCLEOTIDE SEQUENCE [LARGE SCALE GENOMIC DNA]</scope>
    <source>
        <strain>ATCC 24698 / 74-OR23-1A / CBS 708.71 / DSM 1257 / FGSC 987</strain>
    </source>
</reference>
<reference key="3">
    <citation type="journal article" date="2003" name="Nature">
        <title>The genome sequence of the filamentous fungus Neurospora crassa.</title>
        <authorList>
            <person name="Galagan J.E."/>
            <person name="Calvo S.E."/>
            <person name="Borkovich K.A."/>
            <person name="Selker E.U."/>
            <person name="Read N.D."/>
            <person name="Jaffe D.B."/>
            <person name="FitzHugh W."/>
            <person name="Ma L.-J."/>
            <person name="Smirnov S."/>
            <person name="Purcell S."/>
            <person name="Rehman B."/>
            <person name="Elkins T."/>
            <person name="Engels R."/>
            <person name="Wang S."/>
            <person name="Nielsen C.B."/>
            <person name="Butler J."/>
            <person name="Endrizzi M."/>
            <person name="Qui D."/>
            <person name="Ianakiev P."/>
            <person name="Bell-Pedersen D."/>
            <person name="Nelson M.A."/>
            <person name="Werner-Washburne M."/>
            <person name="Selitrennikoff C.P."/>
            <person name="Kinsey J.A."/>
            <person name="Braun E.L."/>
            <person name="Zelter A."/>
            <person name="Schulte U."/>
            <person name="Kothe G.O."/>
            <person name="Jedd G."/>
            <person name="Mewes H.-W."/>
            <person name="Staben C."/>
            <person name="Marcotte E."/>
            <person name="Greenberg D."/>
            <person name="Roy A."/>
            <person name="Foley K."/>
            <person name="Naylor J."/>
            <person name="Stange-Thomann N."/>
            <person name="Barrett R."/>
            <person name="Gnerre S."/>
            <person name="Kamal M."/>
            <person name="Kamvysselis M."/>
            <person name="Mauceli E.W."/>
            <person name="Bielke C."/>
            <person name="Rudd S."/>
            <person name="Frishman D."/>
            <person name="Krystofova S."/>
            <person name="Rasmussen C."/>
            <person name="Metzenberg R.L."/>
            <person name="Perkins D.D."/>
            <person name="Kroken S."/>
            <person name="Cogoni C."/>
            <person name="Macino G."/>
            <person name="Catcheside D.E.A."/>
            <person name="Li W."/>
            <person name="Pratt R.J."/>
            <person name="Osmani S.A."/>
            <person name="DeSouza C.P.C."/>
            <person name="Glass N.L."/>
            <person name="Orbach M.J."/>
            <person name="Berglund J.A."/>
            <person name="Voelker R."/>
            <person name="Yarden O."/>
            <person name="Plamann M."/>
            <person name="Seiler S."/>
            <person name="Dunlap J.C."/>
            <person name="Radford A."/>
            <person name="Aramayo R."/>
            <person name="Natvig D.O."/>
            <person name="Alex L.A."/>
            <person name="Mannhaupt G."/>
            <person name="Ebbole D.J."/>
            <person name="Freitag M."/>
            <person name="Paulsen I."/>
            <person name="Sachs M.S."/>
            <person name="Lander E.S."/>
            <person name="Nusbaum C."/>
            <person name="Birren B.W."/>
        </authorList>
    </citation>
    <scope>NUCLEOTIDE SEQUENCE [LARGE SCALE GENOMIC DNA]</scope>
    <source>
        <strain>ATCC 24698 / 74-OR23-1A / CBS 708.71 / DSM 1257 / FGSC 987</strain>
    </source>
</reference>
<protein>
    <recommendedName>
        <fullName>Feruloyl esterase B</fullName>
        <ecNumber>3.1.1.73</ecNumber>
    </recommendedName>
    <alternativeName>
        <fullName>Ferulic acid esterase</fullName>
        <shortName>FAE</shortName>
    </alternativeName>
</protein>
<organism>
    <name type="scientific">Neurospora crassa (strain ATCC 24698 / 74-OR23-1A / CBS 708.71 / DSM 1257 / FGSC 987)</name>
    <dbReference type="NCBI Taxonomy" id="367110"/>
    <lineage>
        <taxon>Eukaryota</taxon>
        <taxon>Fungi</taxon>
        <taxon>Dikarya</taxon>
        <taxon>Ascomycota</taxon>
        <taxon>Pezizomycotina</taxon>
        <taxon>Sordariomycetes</taxon>
        <taxon>Sordariomycetidae</taxon>
        <taxon>Sordariales</taxon>
        <taxon>Sordariaceae</taxon>
        <taxon>Neurospora</taxon>
    </lineage>
</organism>
<keyword id="KW-0119">Carbohydrate metabolism</keyword>
<keyword id="KW-0325">Glycoprotein</keyword>
<keyword id="KW-0378">Hydrolase</keyword>
<keyword id="KW-0624">Polysaccharide degradation</keyword>
<keyword id="KW-1185">Reference proteome</keyword>
<keyword id="KW-0964">Secreted</keyword>
<keyword id="KW-0719">Serine esterase</keyword>
<keyword id="KW-0732">Signal</keyword>
<keyword id="KW-0858">Xylan degradation</keyword>
<accession>Q9HGR3</accession>
<accession>Q7RVZ0</accession>
<comment type="function">
    <text evidence="1">Involved in degradation of plant cell walls. Hydrolyzes of the feruloyl-arabinose ester bond in arabinoxylans as well as the feruloyl-galactose and feruloyl-arabinose ester bonds in pectin (By similarity).</text>
</comment>
<comment type="catalytic activity">
    <reaction>
        <text>feruloyl-polysaccharide + H2O = ferulate + polysaccharide.</text>
        <dbReference type="EC" id="3.1.1.73"/>
    </reaction>
</comment>
<comment type="subcellular location">
    <subcellularLocation>
        <location evidence="1">Secreted</location>
    </subcellularLocation>
</comment>
<comment type="similarity">
    <text evidence="3">Belongs to the carbohydrate esterase 1 (CE1) family. Feruloyl esterase type B subfamily.</text>
</comment>
<name>FAEB_NEUCR</name>